<keyword id="KW-0001">2Fe-2S</keyword>
<keyword id="KW-0058">Aromatic hydrocarbons catabolism</keyword>
<keyword id="KW-0274">FAD</keyword>
<keyword id="KW-0285">Flavoprotein</keyword>
<keyword id="KW-0408">Iron</keyword>
<keyword id="KW-0411">Iron-sulfur</keyword>
<keyword id="KW-0479">Metal-binding</keyword>
<keyword id="KW-0520">NAD</keyword>
<keyword id="KW-0560">Oxidoreductase</keyword>
<sequence length="343" mass="38549">MNHSVALNFADGKTFFIAVQEDELLLDAAVRQGINLPLDCREGVCGTCQGTCETGIYEQEYVDEDALSERDLAKRKMLACQTRVKSNAAFYFDHHSSICNAGETLKIATVVTGVELVSETTAILHLDASQHVKQLDFLPGQYARLQIPDTDDWRSYSFANRPNASNQLQFLIRLLPNGVMSNYLRERCQVGQTLIMEAPLGSFYLREVERPLVFIAGGTGLSAFLGMLDNIAEQPNQPSVHLYYGVNTEADLCEQKRLTTYAERIKNFSYHPIISKASEQWQGKSGFIHEHLDKNQLSEQSFDMYLCGPPPMIEAVKTWLDEQAIADCHIYSEKFLQSNTAKT</sequence>
<organism>
    <name type="scientific">Acinetobacter baylyi (strain ATCC 33305 / BD413 / ADP1)</name>
    <dbReference type="NCBI Taxonomy" id="62977"/>
    <lineage>
        <taxon>Bacteria</taxon>
        <taxon>Pseudomonadati</taxon>
        <taxon>Pseudomonadota</taxon>
        <taxon>Gammaproteobacteria</taxon>
        <taxon>Moraxellales</taxon>
        <taxon>Moraxellaceae</taxon>
        <taxon>Acinetobacter</taxon>
    </lineage>
</organism>
<gene>
    <name evidence="8" type="primary">antC</name>
    <name type="ordered locus">ACIAD2671</name>
</gene>
<feature type="chain" id="PRO_0000415159" description="Anthranilate 1,2-dioxygenase electron transfer component">
    <location>
        <begin position="1"/>
        <end position="343"/>
    </location>
</feature>
<feature type="domain" description="2Fe-2S ferredoxin-type" evidence="3">
    <location>
        <begin position="3"/>
        <end position="96"/>
    </location>
</feature>
<feature type="domain" description="FAD-binding FR-type" evidence="4">
    <location>
        <begin position="103"/>
        <end position="206"/>
    </location>
</feature>
<feature type="region of interest" description="Ferredoxin-reductase">
    <location>
        <begin position="98"/>
        <end position="338"/>
    </location>
</feature>
<feature type="binding site" evidence="3">
    <location>
        <position position="40"/>
    </location>
    <ligand>
        <name>[2Fe-2S] cluster</name>
        <dbReference type="ChEBI" id="CHEBI:190135"/>
    </ligand>
</feature>
<feature type="binding site" evidence="3">
    <location>
        <position position="45"/>
    </location>
    <ligand>
        <name>[2Fe-2S] cluster</name>
        <dbReference type="ChEBI" id="CHEBI:190135"/>
    </ligand>
</feature>
<feature type="binding site" evidence="3">
    <location>
        <position position="48"/>
    </location>
    <ligand>
        <name>[2Fe-2S] cluster</name>
        <dbReference type="ChEBI" id="CHEBI:190135"/>
    </ligand>
</feature>
<feature type="binding site" evidence="3">
    <location>
        <position position="80"/>
    </location>
    <ligand>
        <name>[2Fe-2S] cluster</name>
        <dbReference type="ChEBI" id="CHEBI:190135"/>
    </ligand>
</feature>
<dbReference type="EC" id="1.18.1.3" evidence="5 9"/>
<dbReference type="EMBL" id="AF071556">
    <property type="protein sequence ID" value="AAC34815.1"/>
    <property type="molecule type" value="Genomic_DNA"/>
</dbReference>
<dbReference type="EMBL" id="CR543861">
    <property type="protein sequence ID" value="CAG69426.1"/>
    <property type="molecule type" value="Genomic_DNA"/>
</dbReference>
<dbReference type="SMR" id="O85675"/>
<dbReference type="STRING" id="202950.GCA_001485005_02317"/>
<dbReference type="KEGG" id="aci:ACIAD2671"/>
<dbReference type="eggNOG" id="COG0543">
    <property type="taxonomic scope" value="Bacteria"/>
</dbReference>
<dbReference type="eggNOG" id="COG1018">
    <property type="taxonomic scope" value="Bacteria"/>
</dbReference>
<dbReference type="HOGENOM" id="CLU_003827_7_0_6"/>
<dbReference type="OrthoDB" id="9806195at2"/>
<dbReference type="BioCyc" id="ASP62977:ACIAD_RS12145-MONOMER"/>
<dbReference type="BioCyc" id="MetaCyc:MONOMER-7504"/>
<dbReference type="UniPathway" id="UPA01016">
    <property type="reaction ID" value="UER01026"/>
</dbReference>
<dbReference type="Proteomes" id="UP000000430">
    <property type="component" value="Chromosome"/>
</dbReference>
<dbReference type="GO" id="GO:0051537">
    <property type="term" value="F:2 iron, 2 sulfur cluster binding"/>
    <property type="evidence" value="ECO:0007669"/>
    <property type="project" value="UniProtKB-KW"/>
</dbReference>
<dbReference type="GO" id="GO:0008860">
    <property type="term" value="F:ferredoxin-NAD+ reductase activity"/>
    <property type="evidence" value="ECO:0007669"/>
    <property type="project" value="UniProtKB-EC"/>
</dbReference>
<dbReference type="GO" id="GO:0046872">
    <property type="term" value="F:metal ion binding"/>
    <property type="evidence" value="ECO:0007669"/>
    <property type="project" value="UniProtKB-KW"/>
</dbReference>
<dbReference type="GO" id="GO:0009056">
    <property type="term" value="P:catabolic process"/>
    <property type="evidence" value="ECO:0007669"/>
    <property type="project" value="UniProtKB-KW"/>
</dbReference>
<dbReference type="CDD" id="cd06209">
    <property type="entry name" value="BenDO_FAD_NAD"/>
    <property type="match status" value="1"/>
</dbReference>
<dbReference type="CDD" id="cd00207">
    <property type="entry name" value="fer2"/>
    <property type="match status" value="1"/>
</dbReference>
<dbReference type="Gene3D" id="3.10.20.30">
    <property type="match status" value="1"/>
</dbReference>
<dbReference type="Gene3D" id="3.40.50.80">
    <property type="entry name" value="Nucleotide-binding domain of ferredoxin-NADP reductase (FNR) module"/>
    <property type="match status" value="1"/>
</dbReference>
<dbReference type="Gene3D" id="2.40.30.10">
    <property type="entry name" value="Translation factors"/>
    <property type="match status" value="1"/>
</dbReference>
<dbReference type="InterPro" id="IPR036010">
    <property type="entry name" value="2Fe-2S_ferredoxin-like_sf"/>
</dbReference>
<dbReference type="InterPro" id="IPR001041">
    <property type="entry name" value="2Fe-2S_ferredoxin-type"/>
</dbReference>
<dbReference type="InterPro" id="IPR006058">
    <property type="entry name" value="2Fe2S_fd_BS"/>
</dbReference>
<dbReference type="InterPro" id="IPR047683">
    <property type="entry name" value="BenC-like_FAD_NAD-bd"/>
</dbReference>
<dbReference type="InterPro" id="IPR012675">
    <property type="entry name" value="Beta-grasp_dom_sf"/>
</dbReference>
<dbReference type="InterPro" id="IPR008333">
    <property type="entry name" value="Cbr1-like_FAD-bd_dom"/>
</dbReference>
<dbReference type="InterPro" id="IPR017927">
    <property type="entry name" value="FAD-bd_FR_type"/>
</dbReference>
<dbReference type="InterPro" id="IPR039261">
    <property type="entry name" value="FNR_nucleotide-bd"/>
</dbReference>
<dbReference type="InterPro" id="IPR050415">
    <property type="entry name" value="MRET"/>
</dbReference>
<dbReference type="InterPro" id="IPR001433">
    <property type="entry name" value="OxRdtase_FAD/NAD-bd"/>
</dbReference>
<dbReference type="InterPro" id="IPR017938">
    <property type="entry name" value="Riboflavin_synthase-like_b-brl"/>
</dbReference>
<dbReference type="NCBIfam" id="NF008822">
    <property type="entry name" value="PRK11872.1"/>
    <property type="match status" value="1"/>
</dbReference>
<dbReference type="PANTHER" id="PTHR47354">
    <property type="entry name" value="NADH OXIDOREDUCTASE HCR"/>
    <property type="match status" value="1"/>
</dbReference>
<dbReference type="PANTHER" id="PTHR47354:SF5">
    <property type="entry name" value="PROTEIN RFBI"/>
    <property type="match status" value="1"/>
</dbReference>
<dbReference type="Pfam" id="PF00970">
    <property type="entry name" value="FAD_binding_6"/>
    <property type="match status" value="1"/>
</dbReference>
<dbReference type="Pfam" id="PF00111">
    <property type="entry name" value="Fer2"/>
    <property type="match status" value="1"/>
</dbReference>
<dbReference type="Pfam" id="PF00175">
    <property type="entry name" value="NAD_binding_1"/>
    <property type="match status" value="1"/>
</dbReference>
<dbReference type="PRINTS" id="PR00410">
    <property type="entry name" value="PHEHYDRXLASE"/>
</dbReference>
<dbReference type="SUPFAM" id="SSF54292">
    <property type="entry name" value="2Fe-2S ferredoxin-like"/>
    <property type="match status" value="1"/>
</dbReference>
<dbReference type="SUPFAM" id="SSF52343">
    <property type="entry name" value="Ferredoxin reductase-like, C-terminal NADP-linked domain"/>
    <property type="match status" value="1"/>
</dbReference>
<dbReference type="SUPFAM" id="SSF63380">
    <property type="entry name" value="Riboflavin synthase domain-like"/>
    <property type="match status" value="1"/>
</dbReference>
<dbReference type="PROSITE" id="PS00197">
    <property type="entry name" value="2FE2S_FER_1"/>
    <property type="match status" value="1"/>
</dbReference>
<dbReference type="PROSITE" id="PS51085">
    <property type="entry name" value="2FE2S_FER_2"/>
    <property type="match status" value="1"/>
</dbReference>
<dbReference type="PROSITE" id="PS51384">
    <property type="entry name" value="FAD_FR"/>
    <property type="match status" value="1"/>
</dbReference>
<reference evidence="8" key="1">
    <citation type="journal article" date="1998" name="J. Bacteriol.">
        <title>Similarities between the antABC-encoded anthranilate dioxygenase and the benABC-encoded benzoate dioxygenase of Acinetobacter sp. strain ADP1.</title>
        <authorList>
            <person name="Bundy B.M."/>
            <person name="Campbell A.L."/>
            <person name="Neidle E.L."/>
        </authorList>
    </citation>
    <scope>NUCLEOTIDE SEQUENCE [GENOMIC DNA]</scope>
    <source>
        <strain>ATCC 33305 / BD413 / ADP1</strain>
    </source>
</reference>
<reference evidence="9" key="2">
    <citation type="journal article" date="2004" name="Nucleic Acids Res.">
        <title>Unique features revealed by the genome sequence of Acinetobacter sp. ADP1, a versatile and naturally transformation competent bacterium.</title>
        <authorList>
            <person name="Barbe V."/>
            <person name="Vallenet D."/>
            <person name="Fonknechten N."/>
            <person name="Kreimeyer A."/>
            <person name="Oztas S."/>
            <person name="Labarre L."/>
            <person name="Cruveiller S."/>
            <person name="Robert C."/>
            <person name="Duprat S."/>
            <person name="Wincker P."/>
            <person name="Ornston L.N."/>
            <person name="Weissenbach J."/>
            <person name="Marliere P."/>
            <person name="Cohen G.N."/>
            <person name="Medigue C."/>
        </authorList>
    </citation>
    <scope>NUCLEOTIDE SEQUENCE [LARGE SCALE GENOMIC DNA]</scope>
    <source>
        <strain>ATCC 33305 / BD413 / ADP1</strain>
    </source>
</reference>
<reference evidence="7" key="3">
    <citation type="journal article" date="2001" name="J. Bacteriol.">
        <title>Characterization and evolution of anthranilate 1,2-dioxygenase from Acinetobacter sp. strain ADP1.</title>
        <authorList>
            <person name="Eby D.M."/>
            <person name="Beharry Z.M."/>
            <person name="Coulter E.D."/>
            <person name="Kurtz D.M. Jr."/>
            <person name="Neidle E.L."/>
        </authorList>
    </citation>
    <scope>FUNCTION</scope>
    <scope>CATALYTIC ACTIVITY</scope>
    <scope>COFACTOR</scope>
    <scope>PATHWAY</scope>
    <scope>SUBUNIT</scope>
    <source>
        <strain>ATCC 33305 / BD413 / ADP1</strain>
    </source>
</reference>
<evidence type="ECO:0000250" key="1">
    <source>
        <dbReference type="UniProtKB" id="Q51603"/>
    </source>
</evidence>
<evidence type="ECO:0000255" key="2"/>
<evidence type="ECO:0000255" key="3">
    <source>
        <dbReference type="PROSITE-ProRule" id="PRU00465"/>
    </source>
</evidence>
<evidence type="ECO:0000255" key="4">
    <source>
        <dbReference type="PROSITE-ProRule" id="PRU00716"/>
    </source>
</evidence>
<evidence type="ECO:0000269" key="5">
    <source>
    </source>
</evidence>
<evidence type="ECO:0000303" key="6">
    <source>
    </source>
</evidence>
<evidence type="ECO:0000305" key="7"/>
<evidence type="ECO:0000312" key="8">
    <source>
        <dbReference type="EMBL" id="AAC34815.1"/>
    </source>
</evidence>
<evidence type="ECO:0000312" key="9">
    <source>
        <dbReference type="EMBL" id="CAG69426.1"/>
    </source>
</evidence>
<proteinExistence type="evidence at protein level"/>
<accession>O85675</accession>
<protein>
    <recommendedName>
        <fullName evidence="6">Anthranilate 1,2-dioxygenase electron transfer component</fullName>
    </recommendedName>
    <domain>
        <recommendedName>
            <fullName evidence="1">Ferredoxin</fullName>
        </recommendedName>
    </domain>
    <domain>
        <recommendedName>
            <fullName evidence="1">Ferredoxin--NAD(+) reductase</fullName>
            <ecNumber evidence="5 9">1.18.1.3</ecNumber>
        </recommendedName>
    </domain>
</protein>
<comment type="function">
    <text evidence="5">Electron transfer component of anthranilate 1,2-dioxygenase system.</text>
</comment>
<comment type="catalytic activity">
    <reaction evidence="5">
        <text>2 reduced [2Fe-2S]-[ferredoxin] + NAD(+) + H(+) = 2 oxidized [2Fe-2S]-[ferredoxin] + NADH</text>
        <dbReference type="Rhea" id="RHEA:16521"/>
        <dbReference type="Rhea" id="RHEA-COMP:10000"/>
        <dbReference type="Rhea" id="RHEA-COMP:10001"/>
        <dbReference type="ChEBI" id="CHEBI:15378"/>
        <dbReference type="ChEBI" id="CHEBI:33737"/>
        <dbReference type="ChEBI" id="CHEBI:33738"/>
        <dbReference type="ChEBI" id="CHEBI:57540"/>
        <dbReference type="ChEBI" id="CHEBI:57945"/>
        <dbReference type="EC" id="1.18.1.3"/>
    </reaction>
</comment>
<comment type="cofactor">
    <cofactor evidence="5">
        <name>FAD</name>
        <dbReference type="ChEBI" id="CHEBI:57692"/>
    </cofactor>
</comment>
<comment type="cofactor">
    <cofactor evidence="5">
        <name>[2Fe-2S] cluster</name>
        <dbReference type="ChEBI" id="CHEBI:190135"/>
    </cofactor>
    <text evidence="5">Binds 1 [2Fe-2S] cluster per subunit.</text>
</comment>
<comment type="pathway">
    <text evidence="5">Aromatic compound metabolism; anthranilate degradation via hydroxylation; catechol from anthranilate: step 1/1.</text>
</comment>
<comment type="subunit">
    <text evidence="5">Monomer. It is part of the anthranilate dioxygenase two component enzyme system. The other component is an oxygenase component consisting of 3 large (AntA) and 3 small (AntB) subunits.</text>
</comment>
<comment type="similarity">
    <text evidence="2">Belongs to the bacterial ring-hydroxylating dioxygenase ferredoxin reductase family.</text>
</comment>
<name>ANTDC_ACIAD</name>